<proteinExistence type="inferred from homology"/>
<name>FLUC_PHOPR</name>
<sequence>MSQFTLLGFIALGGAFGACSRYLISELCVVLLGRGFPYGTLTVNVIGSLLMGILMSSLNQGLIEAGPWRPIIGLGFLGALTTFSTFSMDNVILMQHGEFIKAGLNILLNVALSITACFIGYQLMMKS</sequence>
<dbReference type="EMBL" id="CR378663">
    <property type="protein sequence ID" value="CAG18542.1"/>
    <property type="molecule type" value="Genomic_DNA"/>
</dbReference>
<dbReference type="RefSeq" id="WP_006233213.1">
    <property type="nucleotide sequence ID" value="NC_006370.1"/>
</dbReference>
<dbReference type="SMR" id="Q6LVY3"/>
<dbReference type="KEGG" id="ppr:PBPRA0103"/>
<dbReference type="eggNOG" id="COG0239">
    <property type="taxonomic scope" value="Bacteria"/>
</dbReference>
<dbReference type="HOGENOM" id="CLU_114342_3_0_6"/>
<dbReference type="Proteomes" id="UP000000593">
    <property type="component" value="Chromosome 1"/>
</dbReference>
<dbReference type="GO" id="GO:0005886">
    <property type="term" value="C:plasma membrane"/>
    <property type="evidence" value="ECO:0007669"/>
    <property type="project" value="UniProtKB-SubCell"/>
</dbReference>
<dbReference type="GO" id="GO:0062054">
    <property type="term" value="F:fluoride channel activity"/>
    <property type="evidence" value="ECO:0007669"/>
    <property type="project" value="UniProtKB-UniRule"/>
</dbReference>
<dbReference type="GO" id="GO:0046872">
    <property type="term" value="F:metal ion binding"/>
    <property type="evidence" value="ECO:0007669"/>
    <property type="project" value="UniProtKB-KW"/>
</dbReference>
<dbReference type="GO" id="GO:0140114">
    <property type="term" value="P:cellular detoxification of fluoride"/>
    <property type="evidence" value="ECO:0007669"/>
    <property type="project" value="UniProtKB-UniRule"/>
</dbReference>
<dbReference type="HAMAP" id="MF_00454">
    <property type="entry name" value="FluC"/>
    <property type="match status" value="1"/>
</dbReference>
<dbReference type="InterPro" id="IPR003691">
    <property type="entry name" value="FluC"/>
</dbReference>
<dbReference type="NCBIfam" id="TIGR00494">
    <property type="entry name" value="crcB"/>
    <property type="match status" value="1"/>
</dbReference>
<dbReference type="NCBIfam" id="NF010796">
    <property type="entry name" value="PRK14200.1"/>
    <property type="match status" value="1"/>
</dbReference>
<dbReference type="PANTHER" id="PTHR28259">
    <property type="entry name" value="FLUORIDE EXPORT PROTEIN 1-RELATED"/>
    <property type="match status" value="1"/>
</dbReference>
<dbReference type="PANTHER" id="PTHR28259:SF1">
    <property type="entry name" value="FLUORIDE EXPORT PROTEIN 1-RELATED"/>
    <property type="match status" value="1"/>
</dbReference>
<dbReference type="Pfam" id="PF02537">
    <property type="entry name" value="CRCB"/>
    <property type="match status" value="1"/>
</dbReference>
<feature type="chain" id="PRO_0000110148" description="Fluoride-specific ion channel FluC">
    <location>
        <begin position="1"/>
        <end position="127"/>
    </location>
</feature>
<feature type="transmembrane region" description="Helical" evidence="1">
    <location>
        <begin position="4"/>
        <end position="24"/>
    </location>
</feature>
<feature type="transmembrane region" description="Helical" evidence="1">
    <location>
        <begin position="35"/>
        <end position="55"/>
    </location>
</feature>
<feature type="transmembrane region" description="Helical" evidence="1">
    <location>
        <begin position="71"/>
        <end position="91"/>
    </location>
</feature>
<feature type="transmembrane region" description="Helical" evidence="1">
    <location>
        <begin position="99"/>
        <end position="119"/>
    </location>
</feature>
<feature type="binding site" evidence="1">
    <location>
        <position position="78"/>
    </location>
    <ligand>
        <name>Na(+)</name>
        <dbReference type="ChEBI" id="CHEBI:29101"/>
        <note>structural</note>
    </ligand>
</feature>
<feature type="binding site" evidence="1">
    <location>
        <position position="81"/>
    </location>
    <ligand>
        <name>Na(+)</name>
        <dbReference type="ChEBI" id="CHEBI:29101"/>
        <note>structural</note>
    </ligand>
</feature>
<gene>
    <name evidence="1" type="primary">fluC</name>
    <name evidence="1" type="synonym">crcB</name>
    <name type="ordered locus">PBPRA0103</name>
</gene>
<evidence type="ECO:0000255" key="1">
    <source>
        <dbReference type="HAMAP-Rule" id="MF_00454"/>
    </source>
</evidence>
<comment type="function">
    <text evidence="1">Fluoride-specific ion channel. Important for reducing fluoride concentration in the cell, thus reducing its toxicity.</text>
</comment>
<comment type="catalytic activity">
    <reaction evidence="1">
        <text>fluoride(in) = fluoride(out)</text>
        <dbReference type="Rhea" id="RHEA:76159"/>
        <dbReference type="ChEBI" id="CHEBI:17051"/>
    </reaction>
    <physiologicalReaction direction="left-to-right" evidence="1">
        <dbReference type="Rhea" id="RHEA:76160"/>
    </physiologicalReaction>
</comment>
<comment type="activity regulation">
    <text evidence="1">Na(+) is not transported, but it plays an essential structural role and its presence is essential for fluoride channel function.</text>
</comment>
<comment type="subcellular location">
    <subcellularLocation>
        <location evidence="1">Cell inner membrane</location>
        <topology evidence="1">Multi-pass membrane protein</topology>
    </subcellularLocation>
</comment>
<comment type="similarity">
    <text evidence="1">Belongs to the fluoride channel Fluc/FEX (TC 1.A.43) family.</text>
</comment>
<accession>Q6LVY3</accession>
<organism>
    <name type="scientific">Photobacterium profundum (strain SS9)</name>
    <dbReference type="NCBI Taxonomy" id="298386"/>
    <lineage>
        <taxon>Bacteria</taxon>
        <taxon>Pseudomonadati</taxon>
        <taxon>Pseudomonadota</taxon>
        <taxon>Gammaproteobacteria</taxon>
        <taxon>Vibrionales</taxon>
        <taxon>Vibrionaceae</taxon>
        <taxon>Photobacterium</taxon>
    </lineage>
</organism>
<protein>
    <recommendedName>
        <fullName evidence="1">Fluoride-specific ion channel FluC</fullName>
    </recommendedName>
</protein>
<keyword id="KW-0997">Cell inner membrane</keyword>
<keyword id="KW-1003">Cell membrane</keyword>
<keyword id="KW-0407">Ion channel</keyword>
<keyword id="KW-0406">Ion transport</keyword>
<keyword id="KW-0472">Membrane</keyword>
<keyword id="KW-0479">Metal-binding</keyword>
<keyword id="KW-1185">Reference proteome</keyword>
<keyword id="KW-0915">Sodium</keyword>
<keyword id="KW-0812">Transmembrane</keyword>
<keyword id="KW-1133">Transmembrane helix</keyword>
<keyword id="KW-0813">Transport</keyword>
<reference key="1">
    <citation type="journal article" date="2005" name="Science">
        <title>Life at depth: Photobacterium profundum genome sequence and expression analysis.</title>
        <authorList>
            <person name="Vezzi A."/>
            <person name="Campanaro S."/>
            <person name="D'Angelo M."/>
            <person name="Simonato F."/>
            <person name="Vitulo N."/>
            <person name="Lauro F.M."/>
            <person name="Cestaro A."/>
            <person name="Malacrida G."/>
            <person name="Simionati B."/>
            <person name="Cannata N."/>
            <person name="Romualdi C."/>
            <person name="Bartlett D.H."/>
            <person name="Valle G."/>
        </authorList>
    </citation>
    <scope>NUCLEOTIDE SEQUENCE [LARGE SCALE GENOMIC DNA]</scope>
    <source>
        <strain>ATCC BAA-1253 / SS9</strain>
    </source>
</reference>